<reference key="1">
    <citation type="journal article" date="2006" name="Lancet">
        <title>Complete genome sequence of USA300, an epidemic clone of community-acquired meticillin-resistant Staphylococcus aureus.</title>
        <authorList>
            <person name="Diep B.A."/>
            <person name="Gill S.R."/>
            <person name="Chang R.F."/>
            <person name="Phan T.H."/>
            <person name="Chen J.H."/>
            <person name="Davidson M.G."/>
            <person name="Lin F."/>
            <person name="Lin J."/>
            <person name="Carleton H.A."/>
            <person name="Mongodin E.F."/>
            <person name="Sensabaugh G.F."/>
            <person name="Perdreau-Remington F."/>
        </authorList>
    </citation>
    <scope>NUCLEOTIDE SEQUENCE [LARGE SCALE GENOMIC DNA]</scope>
    <source>
        <strain>USA300</strain>
    </source>
</reference>
<evidence type="ECO:0000255" key="1">
    <source>
        <dbReference type="HAMAP-Rule" id="MF_00193"/>
    </source>
</evidence>
<name>NADE_STAA3</name>
<gene>
    <name evidence="1" type="primary">nadE</name>
    <name type="ordered locus">SAUSA300_1893</name>
</gene>
<feature type="chain" id="PRO_1000077614" description="NH(3)-dependent NAD(+) synthetase">
    <location>
        <begin position="1"/>
        <end position="273"/>
    </location>
</feature>
<feature type="binding site" evidence="1">
    <location>
        <begin position="47"/>
        <end position="54"/>
    </location>
    <ligand>
        <name>ATP</name>
        <dbReference type="ChEBI" id="CHEBI:30616"/>
    </ligand>
</feature>
<feature type="binding site" evidence="1">
    <location>
        <position position="53"/>
    </location>
    <ligand>
        <name>Mg(2+)</name>
        <dbReference type="ChEBI" id="CHEBI:18420"/>
    </ligand>
</feature>
<feature type="binding site" evidence="1">
    <location>
        <position position="139"/>
    </location>
    <ligand>
        <name>deamido-NAD(+)</name>
        <dbReference type="ChEBI" id="CHEBI:58437"/>
    </ligand>
</feature>
<feature type="binding site" evidence="1">
    <location>
        <position position="159"/>
    </location>
    <ligand>
        <name>ATP</name>
        <dbReference type="ChEBI" id="CHEBI:30616"/>
    </ligand>
</feature>
<feature type="binding site" evidence="1">
    <location>
        <position position="164"/>
    </location>
    <ligand>
        <name>Mg(2+)</name>
        <dbReference type="ChEBI" id="CHEBI:18420"/>
    </ligand>
</feature>
<feature type="binding site" evidence="1">
    <location>
        <position position="172"/>
    </location>
    <ligand>
        <name>deamido-NAD(+)</name>
        <dbReference type="ChEBI" id="CHEBI:58437"/>
    </ligand>
</feature>
<feature type="binding site" evidence="1">
    <location>
        <position position="179"/>
    </location>
    <ligand>
        <name>deamido-NAD(+)</name>
        <dbReference type="ChEBI" id="CHEBI:58437"/>
    </ligand>
</feature>
<feature type="binding site" evidence="1">
    <location>
        <position position="188"/>
    </location>
    <ligand>
        <name>ATP</name>
        <dbReference type="ChEBI" id="CHEBI:30616"/>
    </ligand>
</feature>
<feature type="binding site" evidence="1">
    <location>
        <position position="210"/>
    </location>
    <ligand>
        <name>ATP</name>
        <dbReference type="ChEBI" id="CHEBI:30616"/>
    </ligand>
</feature>
<feature type="binding site" evidence="1">
    <location>
        <begin position="259"/>
        <end position="260"/>
    </location>
    <ligand>
        <name>deamido-NAD(+)</name>
        <dbReference type="ChEBI" id="CHEBI:58437"/>
    </ligand>
</feature>
<organism>
    <name type="scientific">Staphylococcus aureus (strain USA300)</name>
    <dbReference type="NCBI Taxonomy" id="367830"/>
    <lineage>
        <taxon>Bacteria</taxon>
        <taxon>Bacillati</taxon>
        <taxon>Bacillota</taxon>
        <taxon>Bacilli</taxon>
        <taxon>Bacillales</taxon>
        <taxon>Staphylococcaceae</taxon>
        <taxon>Staphylococcus</taxon>
    </lineage>
</organism>
<sequence length="273" mass="30697">MSKLQDVIVQEMKVKKRIDSAEEIMELKQFIKNYVQSHSFIKSLVLGISGGQDSTLVGKLVQMSVNELREEGIDCTFIAVKLPYGVQKDADEVEQALRFIEPDEIVTVNIKPAVDQSVQSLKEAGIVLTDFQKGNEKARERMKVQFSIASNRQGIVVGTDHSAENITGFYTKYGDGAADIAPIFGLNKRQGRQLLAYLGAPKELYEKTPTADLEDDKPQLPDEDALGVTYEAIDNYLEGKPVTPEEQKVIENHYIRNAHKRELAYTRYTWPKS</sequence>
<proteinExistence type="inferred from homology"/>
<accession>Q2FFI3</accession>
<protein>
    <recommendedName>
        <fullName evidence="1">NH(3)-dependent NAD(+) synthetase</fullName>
        <ecNumber evidence="1">6.3.1.5</ecNumber>
    </recommendedName>
</protein>
<comment type="function">
    <text evidence="1">Catalyzes the ATP-dependent amidation of deamido-NAD to form NAD. Uses ammonia as a nitrogen source.</text>
</comment>
<comment type="catalytic activity">
    <reaction evidence="1">
        <text>deamido-NAD(+) + NH4(+) + ATP = AMP + diphosphate + NAD(+) + H(+)</text>
        <dbReference type="Rhea" id="RHEA:21188"/>
        <dbReference type="ChEBI" id="CHEBI:15378"/>
        <dbReference type="ChEBI" id="CHEBI:28938"/>
        <dbReference type="ChEBI" id="CHEBI:30616"/>
        <dbReference type="ChEBI" id="CHEBI:33019"/>
        <dbReference type="ChEBI" id="CHEBI:57540"/>
        <dbReference type="ChEBI" id="CHEBI:58437"/>
        <dbReference type="ChEBI" id="CHEBI:456215"/>
        <dbReference type="EC" id="6.3.1.5"/>
    </reaction>
</comment>
<comment type="pathway">
    <text evidence="1">Cofactor biosynthesis; NAD(+) biosynthesis; NAD(+) from deamido-NAD(+) (ammonia route): step 1/1.</text>
</comment>
<comment type="subunit">
    <text evidence="1">Homodimer.</text>
</comment>
<comment type="similarity">
    <text evidence="1">Belongs to the NAD synthetase family.</text>
</comment>
<dbReference type="EC" id="6.3.1.5" evidence="1"/>
<dbReference type="EMBL" id="CP000255">
    <property type="protein sequence ID" value="ABD22633.1"/>
    <property type="molecule type" value="Genomic_DNA"/>
</dbReference>
<dbReference type="RefSeq" id="WP_000040873.1">
    <property type="nucleotide sequence ID" value="NZ_CP027476.1"/>
</dbReference>
<dbReference type="SMR" id="Q2FFI3"/>
<dbReference type="KEGG" id="saa:SAUSA300_1893"/>
<dbReference type="HOGENOM" id="CLU_059327_3_0_9"/>
<dbReference type="OMA" id="FCARLRM"/>
<dbReference type="UniPathway" id="UPA00253">
    <property type="reaction ID" value="UER00333"/>
</dbReference>
<dbReference type="Proteomes" id="UP000001939">
    <property type="component" value="Chromosome"/>
</dbReference>
<dbReference type="GO" id="GO:0005737">
    <property type="term" value="C:cytoplasm"/>
    <property type="evidence" value="ECO:0007669"/>
    <property type="project" value="InterPro"/>
</dbReference>
<dbReference type="GO" id="GO:0005524">
    <property type="term" value="F:ATP binding"/>
    <property type="evidence" value="ECO:0007669"/>
    <property type="project" value="UniProtKB-UniRule"/>
</dbReference>
<dbReference type="GO" id="GO:0004359">
    <property type="term" value="F:glutaminase activity"/>
    <property type="evidence" value="ECO:0007669"/>
    <property type="project" value="InterPro"/>
</dbReference>
<dbReference type="GO" id="GO:0046872">
    <property type="term" value="F:metal ion binding"/>
    <property type="evidence" value="ECO:0007669"/>
    <property type="project" value="UniProtKB-KW"/>
</dbReference>
<dbReference type="GO" id="GO:0003952">
    <property type="term" value="F:NAD+ synthase (glutamine-hydrolyzing) activity"/>
    <property type="evidence" value="ECO:0007669"/>
    <property type="project" value="InterPro"/>
</dbReference>
<dbReference type="GO" id="GO:0008795">
    <property type="term" value="F:NAD+ synthase activity"/>
    <property type="evidence" value="ECO:0007669"/>
    <property type="project" value="UniProtKB-UniRule"/>
</dbReference>
<dbReference type="GO" id="GO:0009435">
    <property type="term" value="P:NAD biosynthetic process"/>
    <property type="evidence" value="ECO:0007669"/>
    <property type="project" value="UniProtKB-UniRule"/>
</dbReference>
<dbReference type="CDD" id="cd00553">
    <property type="entry name" value="NAD_synthase"/>
    <property type="match status" value="1"/>
</dbReference>
<dbReference type="FunFam" id="3.40.50.620:FF:000015">
    <property type="entry name" value="NH(3)-dependent NAD(+) synthetase"/>
    <property type="match status" value="1"/>
</dbReference>
<dbReference type="Gene3D" id="3.40.50.620">
    <property type="entry name" value="HUPs"/>
    <property type="match status" value="1"/>
</dbReference>
<dbReference type="HAMAP" id="MF_00193">
    <property type="entry name" value="NadE_ammonia_dep"/>
    <property type="match status" value="1"/>
</dbReference>
<dbReference type="InterPro" id="IPR022310">
    <property type="entry name" value="NAD/GMP_synthase"/>
</dbReference>
<dbReference type="InterPro" id="IPR003694">
    <property type="entry name" value="NAD_synthase"/>
</dbReference>
<dbReference type="InterPro" id="IPR022926">
    <property type="entry name" value="NH(3)-dep_NAD(+)_synth"/>
</dbReference>
<dbReference type="InterPro" id="IPR014729">
    <property type="entry name" value="Rossmann-like_a/b/a_fold"/>
</dbReference>
<dbReference type="NCBIfam" id="TIGR00552">
    <property type="entry name" value="nadE"/>
    <property type="match status" value="1"/>
</dbReference>
<dbReference type="NCBIfam" id="NF001979">
    <property type="entry name" value="PRK00768.1"/>
    <property type="match status" value="1"/>
</dbReference>
<dbReference type="PANTHER" id="PTHR23090">
    <property type="entry name" value="NH 3 /GLUTAMINE-DEPENDENT NAD + SYNTHETASE"/>
    <property type="match status" value="1"/>
</dbReference>
<dbReference type="PANTHER" id="PTHR23090:SF7">
    <property type="entry name" value="NH(3)-DEPENDENT NAD(+) SYNTHETASE"/>
    <property type="match status" value="1"/>
</dbReference>
<dbReference type="Pfam" id="PF02540">
    <property type="entry name" value="NAD_synthase"/>
    <property type="match status" value="1"/>
</dbReference>
<dbReference type="SUPFAM" id="SSF52402">
    <property type="entry name" value="Adenine nucleotide alpha hydrolases-like"/>
    <property type="match status" value="1"/>
</dbReference>
<keyword id="KW-0067">ATP-binding</keyword>
<keyword id="KW-0436">Ligase</keyword>
<keyword id="KW-0460">Magnesium</keyword>
<keyword id="KW-0479">Metal-binding</keyword>
<keyword id="KW-0520">NAD</keyword>
<keyword id="KW-0547">Nucleotide-binding</keyword>